<name>RL4_HELPG</name>
<sequence>MSKAIVLDSHLKEKGSMELPKRYEGINSHNLYLYVKHYLSSARANTAKSKNRAEVSGGGRKPWAQKGGGRARAGSITSPVFVGGGVSHGATNKRNYNLKINKKQKRLALEYALEEKAQANKLFVVEKIAIKGVVEDNKRKHLTKEANQMFQALEQRDTLFVCMNMDEYTELAFSNLKKCLIIDVNELNAYLLAAFSSVVMEEAAFQHIVQDKTEE</sequence>
<accession>B5Z8W6</accession>
<evidence type="ECO:0000255" key="1">
    <source>
        <dbReference type="HAMAP-Rule" id="MF_01328"/>
    </source>
</evidence>
<evidence type="ECO:0000256" key="2">
    <source>
        <dbReference type="SAM" id="MobiDB-lite"/>
    </source>
</evidence>
<evidence type="ECO:0000305" key="3"/>
<organism>
    <name type="scientific">Helicobacter pylori (strain G27)</name>
    <dbReference type="NCBI Taxonomy" id="563041"/>
    <lineage>
        <taxon>Bacteria</taxon>
        <taxon>Pseudomonadati</taxon>
        <taxon>Campylobacterota</taxon>
        <taxon>Epsilonproteobacteria</taxon>
        <taxon>Campylobacterales</taxon>
        <taxon>Helicobacteraceae</taxon>
        <taxon>Helicobacter</taxon>
    </lineage>
</organism>
<keyword id="KW-1185">Reference proteome</keyword>
<keyword id="KW-0687">Ribonucleoprotein</keyword>
<keyword id="KW-0689">Ribosomal protein</keyword>
<keyword id="KW-0694">RNA-binding</keyword>
<keyword id="KW-0699">rRNA-binding</keyword>
<comment type="function">
    <text evidence="1">One of the primary rRNA binding proteins, this protein initially binds near the 5'-end of the 23S rRNA. It is important during the early stages of 50S assembly. It makes multiple contacts with different domains of the 23S rRNA in the assembled 50S subunit and ribosome.</text>
</comment>
<comment type="function">
    <text evidence="1">Forms part of the polypeptide exit tunnel.</text>
</comment>
<comment type="subunit">
    <text evidence="1">Part of the 50S ribosomal subunit.</text>
</comment>
<comment type="similarity">
    <text evidence="1">Belongs to the universal ribosomal protein uL4 family.</text>
</comment>
<protein>
    <recommendedName>
        <fullName evidence="1">Large ribosomal subunit protein uL4</fullName>
    </recommendedName>
    <alternativeName>
        <fullName evidence="3">50S ribosomal protein L4</fullName>
    </alternativeName>
</protein>
<reference key="1">
    <citation type="journal article" date="2009" name="J. Bacteriol.">
        <title>The complete genome sequence of Helicobacter pylori strain G27.</title>
        <authorList>
            <person name="Baltrus D.A."/>
            <person name="Amieva M.R."/>
            <person name="Covacci A."/>
            <person name="Lowe T.M."/>
            <person name="Merrell D.S."/>
            <person name="Ottemann K.M."/>
            <person name="Stein M."/>
            <person name="Salama N.R."/>
            <person name="Guillemin K."/>
        </authorList>
    </citation>
    <scope>NUCLEOTIDE SEQUENCE [LARGE SCALE GENOMIC DNA]</scope>
    <source>
        <strain>G27</strain>
    </source>
</reference>
<dbReference type="EMBL" id="CP001173">
    <property type="protein sequence ID" value="ACI28015.1"/>
    <property type="molecule type" value="Genomic_DNA"/>
</dbReference>
<dbReference type="RefSeq" id="WP_000030117.1">
    <property type="nucleotide sequence ID" value="NC_011333.1"/>
</dbReference>
<dbReference type="SMR" id="B5Z8W6"/>
<dbReference type="KEGG" id="hpg:HPG27_1267"/>
<dbReference type="HOGENOM" id="CLU_041575_5_2_7"/>
<dbReference type="Proteomes" id="UP000001735">
    <property type="component" value="Chromosome"/>
</dbReference>
<dbReference type="GO" id="GO:1990904">
    <property type="term" value="C:ribonucleoprotein complex"/>
    <property type="evidence" value="ECO:0007669"/>
    <property type="project" value="UniProtKB-KW"/>
</dbReference>
<dbReference type="GO" id="GO:0005840">
    <property type="term" value="C:ribosome"/>
    <property type="evidence" value="ECO:0007669"/>
    <property type="project" value="UniProtKB-KW"/>
</dbReference>
<dbReference type="GO" id="GO:0019843">
    <property type="term" value="F:rRNA binding"/>
    <property type="evidence" value="ECO:0007669"/>
    <property type="project" value="UniProtKB-UniRule"/>
</dbReference>
<dbReference type="GO" id="GO:0003735">
    <property type="term" value="F:structural constituent of ribosome"/>
    <property type="evidence" value="ECO:0007669"/>
    <property type="project" value="InterPro"/>
</dbReference>
<dbReference type="GO" id="GO:0006412">
    <property type="term" value="P:translation"/>
    <property type="evidence" value="ECO:0007669"/>
    <property type="project" value="UniProtKB-UniRule"/>
</dbReference>
<dbReference type="FunFam" id="3.40.1370.10:FF:000008">
    <property type="entry name" value="50S ribosomal protein L4"/>
    <property type="match status" value="1"/>
</dbReference>
<dbReference type="Gene3D" id="3.40.1370.10">
    <property type="match status" value="1"/>
</dbReference>
<dbReference type="HAMAP" id="MF_01328_B">
    <property type="entry name" value="Ribosomal_uL4_B"/>
    <property type="match status" value="1"/>
</dbReference>
<dbReference type="InterPro" id="IPR002136">
    <property type="entry name" value="Ribosomal_uL4"/>
</dbReference>
<dbReference type="InterPro" id="IPR013005">
    <property type="entry name" value="Ribosomal_uL4-like"/>
</dbReference>
<dbReference type="InterPro" id="IPR023574">
    <property type="entry name" value="Ribosomal_uL4_dom_sf"/>
</dbReference>
<dbReference type="NCBIfam" id="TIGR03953">
    <property type="entry name" value="rplD_bact"/>
    <property type="match status" value="1"/>
</dbReference>
<dbReference type="PANTHER" id="PTHR10746">
    <property type="entry name" value="50S RIBOSOMAL PROTEIN L4"/>
    <property type="match status" value="1"/>
</dbReference>
<dbReference type="PANTHER" id="PTHR10746:SF6">
    <property type="entry name" value="LARGE RIBOSOMAL SUBUNIT PROTEIN UL4M"/>
    <property type="match status" value="1"/>
</dbReference>
<dbReference type="Pfam" id="PF00573">
    <property type="entry name" value="Ribosomal_L4"/>
    <property type="match status" value="1"/>
</dbReference>
<dbReference type="SUPFAM" id="SSF52166">
    <property type="entry name" value="Ribosomal protein L4"/>
    <property type="match status" value="1"/>
</dbReference>
<proteinExistence type="inferred from homology"/>
<feature type="chain" id="PRO_1000142135" description="Large ribosomal subunit protein uL4">
    <location>
        <begin position="1"/>
        <end position="215"/>
    </location>
</feature>
<feature type="region of interest" description="Disordered" evidence="2">
    <location>
        <begin position="46"/>
        <end position="72"/>
    </location>
</feature>
<feature type="compositionally biased region" description="Gly residues" evidence="2">
    <location>
        <begin position="56"/>
        <end position="71"/>
    </location>
</feature>
<gene>
    <name evidence="1" type="primary">rplD</name>
    <name type="ordered locus">HPG27_1267</name>
</gene>